<protein>
    <recommendedName>
        <fullName>Shugoshin</fullName>
    </recommendedName>
</protein>
<organism>
    <name type="scientific">Candida glabrata (strain ATCC 2001 / BCRC 20586 / JCM 3761 / NBRC 0622 / NRRL Y-65 / CBS 138)</name>
    <name type="common">Yeast</name>
    <name type="synonym">Nakaseomyces glabratus</name>
    <dbReference type="NCBI Taxonomy" id="284593"/>
    <lineage>
        <taxon>Eukaryota</taxon>
        <taxon>Fungi</taxon>
        <taxon>Dikarya</taxon>
        <taxon>Ascomycota</taxon>
        <taxon>Saccharomycotina</taxon>
        <taxon>Saccharomycetes</taxon>
        <taxon>Saccharomycetales</taxon>
        <taxon>Saccharomycetaceae</taxon>
        <taxon>Nakaseomyces</taxon>
    </lineage>
</organism>
<sequence>MSNLYSAGTPHIQELQNILDSQQEEWAAIKENYTTQNSLIAKENCTLKMKLSELENKVSQLIRENVQLRSQVSLNKLEFQNKLASQINVLENGVIQRLEEVLYMFDSIRKKESLPSRPTSTNETVDRIKKRRQSNEEARNRRRSRSVSTGSAHSTSSMKRRSSTFGEDLIDASIKRALDNAQSNSLQTSDTLRLSELPGLNEIDTNNVNNDNLLSPIPHKKRKSNRRKSIYVPELPKPNNEPLMENTIEQQENICSESLIQEGEQSEKLGENLDADQSHVEDQSFSFTNSVLEYSIPEENTLPKQDILDETEKRDTAVNQKKKLEIFHDPPVEELSSSKNEKPPENSITNDPAFITVTGNNKVKHSMKSRKPKKNKGSVDESMPCTQSTESVDFDRPRRTRGKTVDYRLPSLRAKMRRPTEKLVDATTTVNIQDLQVKYKKSKKVLEKELKTDMKAMKSPKKNEKTFESGTIFKKISRDNESRPSSTHSTSSVDAECSHNNSHSENINSSINDTTHSSFNNSTKSVLSDITNISKNKQQQKTKKLLKTAIINDIYDDKTKNAQKTVSFRVNEDDLSVFDLIQHNDTNKSSPKTYRSRSRKNKA</sequence>
<evidence type="ECO:0000250" key="1"/>
<evidence type="ECO:0000255" key="2"/>
<evidence type="ECO:0000256" key="3">
    <source>
        <dbReference type="SAM" id="MobiDB-lite"/>
    </source>
</evidence>
<evidence type="ECO:0000305" key="4"/>
<reference key="1">
    <citation type="journal article" date="2004" name="Nature">
        <title>Genome evolution in yeasts.</title>
        <authorList>
            <person name="Dujon B."/>
            <person name="Sherman D."/>
            <person name="Fischer G."/>
            <person name="Durrens P."/>
            <person name="Casaregola S."/>
            <person name="Lafontaine I."/>
            <person name="de Montigny J."/>
            <person name="Marck C."/>
            <person name="Neuveglise C."/>
            <person name="Talla E."/>
            <person name="Goffard N."/>
            <person name="Frangeul L."/>
            <person name="Aigle M."/>
            <person name="Anthouard V."/>
            <person name="Babour A."/>
            <person name="Barbe V."/>
            <person name="Barnay S."/>
            <person name="Blanchin S."/>
            <person name="Beckerich J.-M."/>
            <person name="Beyne E."/>
            <person name="Bleykasten C."/>
            <person name="Boisrame A."/>
            <person name="Boyer J."/>
            <person name="Cattolico L."/>
            <person name="Confanioleri F."/>
            <person name="de Daruvar A."/>
            <person name="Despons L."/>
            <person name="Fabre E."/>
            <person name="Fairhead C."/>
            <person name="Ferry-Dumazet H."/>
            <person name="Groppi A."/>
            <person name="Hantraye F."/>
            <person name="Hennequin C."/>
            <person name="Jauniaux N."/>
            <person name="Joyet P."/>
            <person name="Kachouri R."/>
            <person name="Kerrest A."/>
            <person name="Koszul R."/>
            <person name="Lemaire M."/>
            <person name="Lesur I."/>
            <person name="Ma L."/>
            <person name="Muller H."/>
            <person name="Nicaud J.-M."/>
            <person name="Nikolski M."/>
            <person name="Oztas S."/>
            <person name="Ozier-Kalogeropoulos O."/>
            <person name="Pellenz S."/>
            <person name="Potier S."/>
            <person name="Richard G.-F."/>
            <person name="Straub M.-L."/>
            <person name="Suleau A."/>
            <person name="Swennen D."/>
            <person name="Tekaia F."/>
            <person name="Wesolowski-Louvel M."/>
            <person name="Westhof E."/>
            <person name="Wirth B."/>
            <person name="Zeniou-Meyer M."/>
            <person name="Zivanovic Y."/>
            <person name="Bolotin-Fukuhara M."/>
            <person name="Thierry A."/>
            <person name="Bouchier C."/>
            <person name="Caudron B."/>
            <person name="Scarpelli C."/>
            <person name="Gaillardin C."/>
            <person name="Weissenbach J."/>
            <person name="Wincker P."/>
            <person name="Souciet J.-L."/>
        </authorList>
    </citation>
    <scope>NUCLEOTIDE SEQUENCE [LARGE SCALE GENOMIC DNA]</scope>
    <source>
        <strain>ATCC 2001 / BCRC 20586 / JCM 3761 / NBRC 0622 / NRRL Y-65 / CBS 138</strain>
    </source>
</reference>
<proteinExistence type="inferred from homology"/>
<accession>Q6FMT2</accession>
<keyword id="KW-0131">Cell cycle</keyword>
<keyword id="KW-0132">Cell division</keyword>
<keyword id="KW-0137">Centromere</keyword>
<keyword id="KW-0158">Chromosome</keyword>
<keyword id="KW-0159">Chromosome partition</keyword>
<keyword id="KW-0175">Coiled coil</keyword>
<keyword id="KW-0539">Nucleus</keyword>
<keyword id="KW-1185">Reference proteome</keyword>
<gene>
    <name type="primary">SGO1</name>
    <name type="ordered locus">CAGL0K05445g</name>
</gene>
<name>SGO1_CANGA</name>
<comment type="function">
    <text evidence="1">Plays a central role in chromosome cohesion during cell division by preventing premature dissociation of cohesin complex from centromeres after prophase, when most of cohesin complex dissociates from chromosomes arms.</text>
</comment>
<comment type="subcellular location">
    <subcellularLocation>
        <location evidence="1">Nucleus</location>
    </subcellularLocation>
    <subcellularLocation>
        <location evidence="1">Chromosome</location>
        <location evidence="1">Centromere</location>
    </subcellularLocation>
</comment>
<comment type="similarity">
    <text evidence="4">Belongs to the shugoshin family.</text>
</comment>
<feature type="chain" id="PRO_0000055446" description="Shugoshin">
    <location>
        <begin position="1"/>
        <end position="603"/>
    </location>
</feature>
<feature type="region of interest" description="Disordered" evidence="3">
    <location>
        <begin position="112"/>
        <end position="164"/>
    </location>
</feature>
<feature type="region of interest" description="Disordered" evidence="3">
    <location>
        <begin position="201"/>
        <end position="227"/>
    </location>
</feature>
<feature type="region of interest" description="Disordered" evidence="3">
    <location>
        <begin position="331"/>
        <end position="399"/>
    </location>
</feature>
<feature type="region of interest" description="Disordered" evidence="3">
    <location>
        <begin position="455"/>
        <end position="519"/>
    </location>
</feature>
<feature type="region of interest" description="Disordered" evidence="3">
    <location>
        <begin position="583"/>
        <end position="603"/>
    </location>
</feature>
<feature type="coiled-coil region" evidence="2">
    <location>
        <begin position="11"/>
        <end position="74"/>
    </location>
</feature>
<feature type="coiled-coil region" evidence="2">
    <location>
        <begin position="304"/>
        <end position="325"/>
    </location>
</feature>
<feature type="coiled-coil region" evidence="2">
    <location>
        <begin position="431"/>
        <end position="451"/>
    </location>
</feature>
<feature type="compositionally biased region" description="Low complexity" evidence="3">
    <location>
        <begin position="146"/>
        <end position="157"/>
    </location>
</feature>
<feature type="compositionally biased region" description="Low complexity" evidence="3">
    <location>
        <begin position="201"/>
        <end position="214"/>
    </location>
</feature>
<feature type="compositionally biased region" description="Basic residues" evidence="3">
    <location>
        <begin position="218"/>
        <end position="227"/>
    </location>
</feature>
<feature type="compositionally biased region" description="Basic residues" evidence="3">
    <location>
        <begin position="362"/>
        <end position="376"/>
    </location>
</feature>
<feature type="compositionally biased region" description="Basic and acidic residues" evidence="3">
    <location>
        <begin position="455"/>
        <end position="467"/>
    </location>
</feature>
<feature type="compositionally biased region" description="Low complexity" evidence="3">
    <location>
        <begin position="483"/>
        <end position="512"/>
    </location>
</feature>
<feature type="compositionally biased region" description="Polar residues" evidence="3">
    <location>
        <begin position="583"/>
        <end position="593"/>
    </location>
</feature>
<feature type="compositionally biased region" description="Basic residues" evidence="3">
    <location>
        <begin position="594"/>
        <end position="603"/>
    </location>
</feature>
<dbReference type="EMBL" id="CR380957">
    <property type="protein sequence ID" value="CAG61423.1"/>
    <property type="molecule type" value="Genomic_DNA"/>
</dbReference>
<dbReference type="RefSeq" id="XP_448462.1">
    <property type="nucleotide sequence ID" value="XM_448462.1"/>
</dbReference>
<dbReference type="SMR" id="Q6FMT2"/>
<dbReference type="FunCoup" id="Q6FMT2">
    <property type="interactions" value="203"/>
</dbReference>
<dbReference type="STRING" id="284593.Q6FMT2"/>
<dbReference type="EnsemblFungi" id="CAGL0K05445g-T">
    <property type="protein sequence ID" value="CAGL0K05445g-T-p1"/>
    <property type="gene ID" value="CAGL0K05445g"/>
</dbReference>
<dbReference type="KEGG" id="cgr:2890486"/>
<dbReference type="CGD" id="CAL0134399">
    <property type="gene designation" value="CAGL0K05445g"/>
</dbReference>
<dbReference type="VEuPathDB" id="FungiDB:CAGL0K05445g"/>
<dbReference type="eggNOG" id="ENOG502QSMK">
    <property type="taxonomic scope" value="Eukaryota"/>
</dbReference>
<dbReference type="HOGENOM" id="CLU_019322_0_0_1"/>
<dbReference type="InParanoid" id="Q6FMT2"/>
<dbReference type="OMA" id="HQPKTYR"/>
<dbReference type="Proteomes" id="UP000002428">
    <property type="component" value="Chromosome K"/>
</dbReference>
<dbReference type="GO" id="GO:0000776">
    <property type="term" value="C:kinetochore"/>
    <property type="evidence" value="ECO:0007669"/>
    <property type="project" value="EnsemblFungi"/>
</dbReference>
<dbReference type="GO" id="GO:0005634">
    <property type="term" value="C:nucleus"/>
    <property type="evidence" value="ECO:0007669"/>
    <property type="project" value="UniProtKB-SubCell"/>
</dbReference>
<dbReference type="GO" id="GO:0051301">
    <property type="term" value="P:cell division"/>
    <property type="evidence" value="ECO:0007669"/>
    <property type="project" value="UniProtKB-KW"/>
</dbReference>
<dbReference type="GO" id="GO:0034508">
    <property type="term" value="P:centromere complex assembly"/>
    <property type="evidence" value="ECO:0007669"/>
    <property type="project" value="EnsemblFungi"/>
</dbReference>
<dbReference type="GO" id="GO:0070199">
    <property type="term" value="P:establishment of protein localization to chromosome"/>
    <property type="evidence" value="ECO:0007669"/>
    <property type="project" value="EnsemblFungi"/>
</dbReference>
<dbReference type="GO" id="GO:0051383">
    <property type="term" value="P:kinetochore organization"/>
    <property type="evidence" value="ECO:0007669"/>
    <property type="project" value="EnsemblFungi"/>
</dbReference>
<dbReference type="GO" id="GO:0034090">
    <property type="term" value="P:maintenance of meiotic sister chromatid cohesion"/>
    <property type="evidence" value="ECO:0007669"/>
    <property type="project" value="EnsemblFungi"/>
</dbReference>
<dbReference type="GO" id="GO:0045144">
    <property type="term" value="P:meiotic sister chromatid segregation"/>
    <property type="evidence" value="ECO:0007669"/>
    <property type="project" value="EnsemblFungi"/>
</dbReference>
<dbReference type="GO" id="GO:0051757">
    <property type="term" value="P:meiotic sister chromatid separation"/>
    <property type="evidence" value="ECO:0007669"/>
    <property type="project" value="EnsemblFungi"/>
</dbReference>
<dbReference type="GO" id="GO:0000070">
    <property type="term" value="P:mitotic sister chromatid segregation"/>
    <property type="evidence" value="ECO:0007669"/>
    <property type="project" value="EnsemblFungi"/>
</dbReference>
<dbReference type="GO" id="GO:0007094">
    <property type="term" value="P:mitotic spindle assembly checkpoint signaling"/>
    <property type="evidence" value="ECO:0007669"/>
    <property type="project" value="EnsemblFungi"/>
</dbReference>
<dbReference type="GO" id="GO:0034096">
    <property type="term" value="P:positive regulation of maintenance of meiotic sister chromatid cohesion"/>
    <property type="evidence" value="ECO:0007669"/>
    <property type="project" value="EnsemblFungi"/>
</dbReference>
<dbReference type="GO" id="GO:0031134">
    <property type="term" value="P:sister chromatid biorientation"/>
    <property type="evidence" value="ECO:0007669"/>
    <property type="project" value="EnsemblFungi"/>
</dbReference>
<dbReference type="InterPro" id="IPR011515">
    <property type="entry name" value="Shugoshin_C"/>
</dbReference>
<dbReference type="InterPro" id="IPR011516">
    <property type="entry name" value="Shugoshin_N"/>
</dbReference>
<dbReference type="Pfam" id="PF07557">
    <property type="entry name" value="Shugoshin_C"/>
    <property type="match status" value="1"/>
</dbReference>
<dbReference type="Pfam" id="PF07558">
    <property type="entry name" value="Shugoshin_N"/>
    <property type="match status" value="1"/>
</dbReference>